<protein>
    <recommendedName>
        <fullName evidence="1">Glutaminase</fullName>
        <ecNumber evidence="1">3.5.1.2</ecNumber>
    </recommendedName>
</protein>
<feature type="chain" id="PRO_1000048354" description="Glutaminase">
    <location>
        <begin position="1"/>
        <end position="308"/>
    </location>
</feature>
<feature type="binding site" evidence="1">
    <location>
        <position position="66"/>
    </location>
    <ligand>
        <name>substrate</name>
    </ligand>
</feature>
<feature type="binding site" evidence="1">
    <location>
        <position position="117"/>
    </location>
    <ligand>
        <name>substrate</name>
    </ligand>
</feature>
<feature type="binding site" evidence="1">
    <location>
        <position position="161"/>
    </location>
    <ligand>
        <name>substrate</name>
    </ligand>
</feature>
<feature type="binding site" evidence="1">
    <location>
        <position position="168"/>
    </location>
    <ligand>
        <name>substrate</name>
    </ligand>
</feature>
<feature type="binding site" evidence="1">
    <location>
        <position position="192"/>
    </location>
    <ligand>
        <name>substrate</name>
    </ligand>
</feature>
<feature type="binding site" evidence="1">
    <location>
        <position position="244"/>
    </location>
    <ligand>
        <name>substrate</name>
    </ligand>
</feature>
<feature type="binding site" evidence="1">
    <location>
        <position position="262"/>
    </location>
    <ligand>
        <name>substrate</name>
    </ligand>
</feature>
<evidence type="ECO:0000255" key="1">
    <source>
        <dbReference type="HAMAP-Rule" id="MF_00313"/>
    </source>
</evidence>
<keyword id="KW-0378">Hydrolase</keyword>
<proteinExistence type="inferred from homology"/>
<gene>
    <name evidence="1" type="primary">glsA</name>
    <name type="ordered locus">SCH_1542</name>
</gene>
<sequence length="308" mass="33627">MAWAMDNAILETILQRVRPLIGQGKVADYIPALASVEGSKLGIAICTVDGQHYQAGDAHERFSIQSISKVLSLVVAMRHYPEEEIWQRVGKDPSGSPFNSLVQLEMEQGIPRNPFINAGALVVCDMLQGRLSAPRQRMLEVVRALCGVSDITYDATVARSEFEHSARNAAIAWLMKSFGNFHHDVPTVLQNYFHYCALKMSCMELARTFVFLANQGEAFHLDEPVVTPMQARQINALMATSGMYQNAGEFAWRVGLPAKSGVGGGIVAIVPHEMAIAVWSPELDPAGNSLAGIAALEQLTQTLGRSVY</sequence>
<name>GLSA_SALCH</name>
<reference key="1">
    <citation type="journal article" date="2005" name="Nucleic Acids Res.">
        <title>The genome sequence of Salmonella enterica serovar Choleraesuis, a highly invasive and resistant zoonotic pathogen.</title>
        <authorList>
            <person name="Chiu C.-H."/>
            <person name="Tang P."/>
            <person name="Chu C."/>
            <person name="Hu S."/>
            <person name="Bao Q."/>
            <person name="Yu J."/>
            <person name="Chou Y.-Y."/>
            <person name="Wang H.-S."/>
            <person name="Lee Y.-S."/>
        </authorList>
    </citation>
    <scope>NUCLEOTIDE SEQUENCE [LARGE SCALE GENOMIC DNA]</scope>
    <source>
        <strain>SC-B67</strain>
    </source>
</reference>
<dbReference type="EC" id="3.5.1.2" evidence="1"/>
<dbReference type="EMBL" id="AE017220">
    <property type="protein sequence ID" value="AAX65448.1"/>
    <property type="molecule type" value="Genomic_DNA"/>
</dbReference>
<dbReference type="SMR" id="Q57PB3"/>
<dbReference type="KEGG" id="sec:SCH_1542"/>
<dbReference type="HOGENOM" id="CLU_027932_1_1_6"/>
<dbReference type="Proteomes" id="UP000000538">
    <property type="component" value="Chromosome"/>
</dbReference>
<dbReference type="GO" id="GO:0004359">
    <property type="term" value="F:glutaminase activity"/>
    <property type="evidence" value="ECO:0007669"/>
    <property type="project" value="UniProtKB-UniRule"/>
</dbReference>
<dbReference type="GO" id="GO:0006537">
    <property type="term" value="P:glutamate biosynthetic process"/>
    <property type="evidence" value="ECO:0007669"/>
    <property type="project" value="TreeGrafter"/>
</dbReference>
<dbReference type="GO" id="GO:0006543">
    <property type="term" value="P:glutamine catabolic process"/>
    <property type="evidence" value="ECO:0007669"/>
    <property type="project" value="TreeGrafter"/>
</dbReference>
<dbReference type="FunFam" id="3.40.710.10:FF:000005">
    <property type="entry name" value="Glutaminase"/>
    <property type="match status" value="1"/>
</dbReference>
<dbReference type="Gene3D" id="3.40.710.10">
    <property type="entry name" value="DD-peptidase/beta-lactamase superfamily"/>
    <property type="match status" value="1"/>
</dbReference>
<dbReference type="HAMAP" id="MF_00313">
    <property type="entry name" value="Glutaminase"/>
    <property type="match status" value="1"/>
</dbReference>
<dbReference type="InterPro" id="IPR012338">
    <property type="entry name" value="Beta-lactam/transpept-like"/>
</dbReference>
<dbReference type="InterPro" id="IPR015868">
    <property type="entry name" value="Glutaminase"/>
</dbReference>
<dbReference type="NCBIfam" id="TIGR03814">
    <property type="entry name" value="Gln_ase"/>
    <property type="match status" value="1"/>
</dbReference>
<dbReference type="NCBIfam" id="NF002132">
    <property type="entry name" value="PRK00971.1-1"/>
    <property type="match status" value="1"/>
</dbReference>
<dbReference type="NCBIfam" id="NF002133">
    <property type="entry name" value="PRK00971.1-2"/>
    <property type="match status" value="1"/>
</dbReference>
<dbReference type="PANTHER" id="PTHR12544">
    <property type="entry name" value="GLUTAMINASE"/>
    <property type="match status" value="1"/>
</dbReference>
<dbReference type="PANTHER" id="PTHR12544:SF29">
    <property type="entry name" value="GLUTAMINASE"/>
    <property type="match status" value="1"/>
</dbReference>
<dbReference type="Pfam" id="PF04960">
    <property type="entry name" value="Glutaminase"/>
    <property type="match status" value="1"/>
</dbReference>
<dbReference type="SUPFAM" id="SSF56601">
    <property type="entry name" value="beta-lactamase/transpeptidase-like"/>
    <property type="match status" value="1"/>
</dbReference>
<organism>
    <name type="scientific">Salmonella choleraesuis (strain SC-B67)</name>
    <dbReference type="NCBI Taxonomy" id="321314"/>
    <lineage>
        <taxon>Bacteria</taxon>
        <taxon>Pseudomonadati</taxon>
        <taxon>Pseudomonadota</taxon>
        <taxon>Gammaproteobacteria</taxon>
        <taxon>Enterobacterales</taxon>
        <taxon>Enterobacteriaceae</taxon>
        <taxon>Salmonella</taxon>
    </lineage>
</organism>
<accession>Q57PB3</accession>
<comment type="catalytic activity">
    <reaction evidence="1">
        <text>L-glutamine + H2O = L-glutamate + NH4(+)</text>
        <dbReference type="Rhea" id="RHEA:15889"/>
        <dbReference type="ChEBI" id="CHEBI:15377"/>
        <dbReference type="ChEBI" id="CHEBI:28938"/>
        <dbReference type="ChEBI" id="CHEBI:29985"/>
        <dbReference type="ChEBI" id="CHEBI:58359"/>
        <dbReference type="EC" id="3.5.1.2"/>
    </reaction>
</comment>
<comment type="subunit">
    <text evidence="1">Homotetramer.</text>
</comment>
<comment type="similarity">
    <text evidence="1">Belongs to the glutaminase family.</text>
</comment>